<keyword id="KW-1003">Cell membrane</keyword>
<keyword id="KW-0406">Ion transport</keyword>
<keyword id="KW-0472">Membrane</keyword>
<keyword id="KW-1185">Reference proteome</keyword>
<keyword id="KW-0812">Transmembrane</keyword>
<keyword id="KW-1133">Transmembrane helix</keyword>
<keyword id="KW-0813">Transport</keyword>
<dbReference type="EMBL" id="BC148112">
    <property type="protein sequence ID" value="AAI48113.1"/>
    <property type="molecule type" value="mRNA"/>
</dbReference>
<dbReference type="RefSeq" id="NP_001094517.1">
    <property type="nucleotide sequence ID" value="NM_001101047.2"/>
</dbReference>
<dbReference type="SMR" id="A6QLW8"/>
<dbReference type="FunCoup" id="A6QLW8">
    <property type="interactions" value="64"/>
</dbReference>
<dbReference type="STRING" id="9913.ENSBTAP00000008336"/>
<dbReference type="PaxDb" id="9913-ENSBTAP00000008336"/>
<dbReference type="PeptideAtlas" id="A6QLW8"/>
<dbReference type="GeneID" id="407224"/>
<dbReference type="KEGG" id="bta:407224"/>
<dbReference type="CTD" id="10864"/>
<dbReference type="eggNOG" id="KOG0255">
    <property type="taxonomic scope" value="Eukaryota"/>
</dbReference>
<dbReference type="InParanoid" id="A6QLW8"/>
<dbReference type="OrthoDB" id="2544694at2759"/>
<dbReference type="Proteomes" id="UP000009136">
    <property type="component" value="Unplaced"/>
</dbReference>
<dbReference type="GO" id="GO:0016324">
    <property type="term" value="C:apical plasma membrane"/>
    <property type="evidence" value="ECO:0000250"/>
    <property type="project" value="UniProtKB"/>
</dbReference>
<dbReference type="GO" id="GO:0009925">
    <property type="term" value="C:basal plasma membrane"/>
    <property type="evidence" value="ECO:0000250"/>
    <property type="project" value="UniProtKB"/>
</dbReference>
<dbReference type="GO" id="GO:0016323">
    <property type="term" value="C:basolateral plasma membrane"/>
    <property type="evidence" value="ECO:0000250"/>
    <property type="project" value="UniProtKB"/>
</dbReference>
<dbReference type="GO" id="GO:0005886">
    <property type="term" value="C:plasma membrane"/>
    <property type="evidence" value="ECO:0000250"/>
    <property type="project" value="UniProtKB"/>
</dbReference>
<dbReference type="GO" id="GO:0015139">
    <property type="term" value="F:alpha-ketoglutarate transmembrane transporter activity"/>
    <property type="evidence" value="ECO:0000250"/>
    <property type="project" value="UniProtKB"/>
</dbReference>
<dbReference type="GO" id="GO:0008514">
    <property type="term" value="F:organic anion transmembrane transporter activity"/>
    <property type="evidence" value="ECO:0000250"/>
    <property type="project" value="UniProtKB"/>
</dbReference>
<dbReference type="GO" id="GO:0015132">
    <property type="term" value="F:prostaglandin transmembrane transporter activity"/>
    <property type="evidence" value="ECO:0000250"/>
    <property type="project" value="UniProtKB"/>
</dbReference>
<dbReference type="GO" id="GO:0015347">
    <property type="term" value="F:sodium-independent organic anion transmembrane transporter activity"/>
    <property type="evidence" value="ECO:0000250"/>
    <property type="project" value="UniProtKB"/>
</dbReference>
<dbReference type="GO" id="GO:0022857">
    <property type="term" value="F:transmembrane transporter activity"/>
    <property type="evidence" value="ECO:0000250"/>
    <property type="project" value="UniProtKB"/>
</dbReference>
<dbReference type="GO" id="GO:0015742">
    <property type="term" value="P:alpha-ketoglutarate transport"/>
    <property type="evidence" value="ECO:0000250"/>
    <property type="project" value="UniProtKB"/>
</dbReference>
<dbReference type="GO" id="GO:0006811">
    <property type="term" value="P:monoatomic ion transport"/>
    <property type="evidence" value="ECO:0007669"/>
    <property type="project" value="UniProtKB-KW"/>
</dbReference>
<dbReference type="GO" id="GO:0015732">
    <property type="term" value="P:prostaglandin transport"/>
    <property type="evidence" value="ECO:0000250"/>
    <property type="project" value="UniProtKB"/>
</dbReference>
<dbReference type="FunFam" id="1.20.1250.20:FF:000170">
    <property type="entry name" value="Solute carrier family 22 member 7"/>
    <property type="match status" value="1"/>
</dbReference>
<dbReference type="Gene3D" id="1.20.1250.20">
    <property type="entry name" value="MFS general substrate transporter like domains"/>
    <property type="match status" value="1"/>
</dbReference>
<dbReference type="InterPro" id="IPR020846">
    <property type="entry name" value="MFS_dom"/>
</dbReference>
<dbReference type="InterPro" id="IPR005828">
    <property type="entry name" value="MFS_sugar_transport-like"/>
</dbReference>
<dbReference type="InterPro" id="IPR036259">
    <property type="entry name" value="MFS_trans_sf"/>
</dbReference>
<dbReference type="InterPro" id="IPR004749">
    <property type="entry name" value="Orgcat_transp/SVOP"/>
</dbReference>
<dbReference type="NCBIfam" id="TIGR00898">
    <property type="entry name" value="2A0119"/>
    <property type="match status" value="1"/>
</dbReference>
<dbReference type="PANTHER" id="PTHR24064">
    <property type="entry name" value="SOLUTE CARRIER FAMILY 22 MEMBER"/>
    <property type="match status" value="1"/>
</dbReference>
<dbReference type="Pfam" id="PF00083">
    <property type="entry name" value="Sugar_tr"/>
    <property type="match status" value="1"/>
</dbReference>
<dbReference type="SUPFAM" id="SSF103473">
    <property type="entry name" value="MFS general substrate transporter"/>
    <property type="match status" value="1"/>
</dbReference>
<dbReference type="PROSITE" id="PS50850">
    <property type="entry name" value="MFS"/>
    <property type="match status" value="1"/>
</dbReference>
<reference key="1">
    <citation type="submission" date="2007-06" db="EMBL/GenBank/DDBJ databases">
        <authorList>
            <consortium name="NIH - Mammalian Gene Collection (MGC) project"/>
        </authorList>
    </citation>
    <scope>NUCLEOTIDE SEQUENCE [LARGE SCALE MRNA]</scope>
    <source>
        <strain>Hereford</strain>
        <tissue>Fetal liver</tissue>
    </source>
</reference>
<proteinExistence type="evidence at transcript level"/>
<gene>
    <name type="primary">SLC22A7</name>
    <name type="synonym">OAT2</name>
</gene>
<organism>
    <name type="scientific">Bos taurus</name>
    <name type="common">Bovine</name>
    <dbReference type="NCBI Taxonomy" id="9913"/>
    <lineage>
        <taxon>Eukaryota</taxon>
        <taxon>Metazoa</taxon>
        <taxon>Chordata</taxon>
        <taxon>Craniata</taxon>
        <taxon>Vertebrata</taxon>
        <taxon>Euteleostomi</taxon>
        <taxon>Mammalia</taxon>
        <taxon>Eutheria</taxon>
        <taxon>Laurasiatheria</taxon>
        <taxon>Artiodactyla</taxon>
        <taxon>Ruminantia</taxon>
        <taxon>Pecora</taxon>
        <taxon>Bovidae</taxon>
        <taxon>Bovinae</taxon>
        <taxon>Bos</taxon>
    </lineage>
</organism>
<protein>
    <recommendedName>
        <fullName evidence="2">Solute carrier family 22 member 7</fullName>
    </recommendedName>
    <alternativeName>
        <fullName evidence="2">Organic anion transporter 2</fullName>
    </alternativeName>
</protein>
<sequence length="547" mass="60004">MGFEELLDKVGGFGPFQLRNVALLALPRVLLPMHFLLPIFLAAVPAHRCALPGVPDNFSNEDAWLEAHLPREPDGRLSACLRFTHPQALPNSTLWGEGQNSGEQPEGEPSTVPCPQGWEYNHSEFSSTIATEWDLVCEQKGLNKAISTFFFAGVLVGAEVYGYLSDRFGRRRLLLVAYVSSLALGLASAASVSYIMFAITRTLTGMALAGFTIIVMPLELEWLDVRHRTVAGVLSSTFWTGGVMLLALIGYLIRDWRWLLLTVTLPCVPGILTLWWVPESARWLLTQGRVEEAHRYLLRCARLNGPPVGEDSLSREALNKVAAAERMVRRPSYLDLFRTPRLRYISLCCMVVWFGVNFSYYGVSLDLSGLGLNVYLTQLVFGAVELPSKLLVYLSVRHAGRRLTMAGTLLGAALAVGLRILVSPEMKSWSTALAVMGKAFSEAAFTTAYLFTSELYPTVLRQTGMGLTALVGRLGGSLAPLAALLDGVWLSLPKLAYGGIALLAACTALLLPETKQAQLPETIQDVERKSAPSSLQEEEMPMKQVQD</sequence>
<comment type="function">
    <text evidence="2">Functions as a Na(+)-independent bidirectional multispecific transporter. Contributes to the renal and hepatic elimination of endogenous organic compounds from the systemic circulation into the urine and bile, respectively. Capable of transporting a wide range of purine and pyrimidine nucleobases, nucleosides and nucleotides, with cGMP, 2'deoxyguanosine and GMP being the preferred substrates. Functions as a pH- and chloride-independent cGMP bidirectional facilitative transporter that can regulate both intracellular and extracellular levels of cGMP and may be involved in cGMP signaling pathways. Mediates orotate/glutamate bidirectional exchange and most likely display a physiological role in hepatic release of glutamate into the blood. Involved in renal secretion and possible reabsorption of creatinine. Able to uptake prostaglandin E2 (PGE2) and may contribute to PGE2 renal excretion. Also transports alpha-ketoglutarate and urate. Apart from the orotate/glutamate exchange, the counterions for the uptake of other SLC22A7/OAT2 substrates remain to be identified.</text>
</comment>
<comment type="catalytic activity">
    <reaction evidence="2">
        <text>orotate(out) + L-glutamate(in) = orotate(in) + L-glutamate(out)</text>
        <dbReference type="Rhea" id="RHEA:72043"/>
        <dbReference type="ChEBI" id="CHEBI:29985"/>
        <dbReference type="ChEBI" id="CHEBI:30839"/>
    </reaction>
</comment>
<comment type="catalytic activity">
    <reaction evidence="2">
        <text>3',5'-cyclic GMP(in) = 3',5'-cyclic GMP(out)</text>
        <dbReference type="Rhea" id="RHEA:76207"/>
        <dbReference type="ChEBI" id="CHEBI:57746"/>
    </reaction>
</comment>
<comment type="catalytic activity">
    <reaction evidence="2">
        <text>GMP(in) = GMP(out)</text>
        <dbReference type="Rhea" id="RHEA:76211"/>
        <dbReference type="ChEBI" id="CHEBI:58115"/>
    </reaction>
</comment>
<comment type="catalytic activity">
    <reaction evidence="2">
        <text>2'-deoxyguanosine(in) = 2'-deoxyguanosine(out)</text>
        <dbReference type="Rhea" id="RHEA:76215"/>
        <dbReference type="ChEBI" id="CHEBI:17172"/>
    </reaction>
</comment>
<comment type="catalytic activity">
    <reaction evidence="2">
        <text>GDP(in) = GDP(out)</text>
        <dbReference type="Rhea" id="RHEA:76219"/>
        <dbReference type="ChEBI" id="CHEBI:58189"/>
    </reaction>
</comment>
<comment type="catalytic activity">
    <reaction evidence="2">
        <text>guanosine(in) = guanosine(out)</text>
        <dbReference type="Rhea" id="RHEA:75371"/>
        <dbReference type="ChEBI" id="CHEBI:16750"/>
    </reaction>
</comment>
<comment type="catalytic activity">
    <reaction evidence="2">
        <text>GTP(in) = GTP(out)</text>
        <dbReference type="Rhea" id="RHEA:75787"/>
        <dbReference type="ChEBI" id="CHEBI:37565"/>
    </reaction>
</comment>
<comment type="catalytic activity">
    <reaction evidence="2">
        <text>3',5'-cyclic AMP(in) = 3',5'-cyclic AMP(out)</text>
        <dbReference type="Rhea" id="RHEA:76223"/>
        <dbReference type="ChEBI" id="CHEBI:58165"/>
    </reaction>
</comment>
<comment type="catalytic activity">
    <reaction evidence="2">
        <text>creatinine(in) = creatinine(out)</text>
        <dbReference type="Rhea" id="RHEA:74539"/>
        <dbReference type="ChEBI" id="CHEBI:16737"/>
    </reaction>
</comment>
<comment type="catalytic activity">
    <reaction evidence="2">
        <text>prostaglandin E2(out) = prostaglandin E2(in)</text>
        <dbReference type="Rhea" id="RHEA:50984"/>
        <dbReference type="ChEBI" id="CHEBI:606564"/>
    </reaction>
</comment>
<comment type="catalytic activity">
    <reaction evidence="2">
        <text>2-oxoglutarate(in) = 2-oxoglutarate(out)</text>
        <dbReference type="Rhea" id="RHEA:76231"/>
        <dbReference type="ChEBI" id="CHEBI:16810"/>
    </reaction>
</comment>
<comment type="catalytic activity">
    <reaction evidence="1">
        <text>glutarate(in) = glutarate(out)</text>
        <dbReference type="Rhea" id="RHEA:76251"/>
        <dbReference type="ChEBI" id="CHEBI:30921"/>
    </reaction>
</comment>
<comment type="catalytic activity">
    <reaction evidence="2">
        <text>urate(out) = urate(in)</text>
        <dbReference type="Rhea" id="RHEA:60368"/>
        <dbReference type="ChEBI" id="CHEBI:17775"/>
    </reaction>
</comment>
<comment type="catalytic activity">
    <reaction evidence="2">
        <text>estrone 3-sulfate(out) = estrone 3-sulfate(in)</text>
        <dbReference type="Rhea" id="RHEA:71835"/>
        <dbReference type="ChEBI" id="CHEBI:60050"/>
    </reaction>
</comment>
<comment type="subcellular location">
    <subcellularLocation>
        <location evidence="2">Basolateral cell membrane</location>
        <topology evidence="5">Multi-pass membrane protein</topology>
    </subcellularLocation>
    <subcellularLocation>
        <location evidence="2">Apical cell membrane</location>
        <topology evidence="5">Multi-pass membrane protein</topology>
    </subcellularLocation>
    <subcellularLocation>
        <location evidence="2">Cell membrane</location>
        <topology evidence="5">Multi-pass membrane protein</topology>
    </subcellularLocation>
</comment>
<comment type="similarity">
    <text evidence="5">Belongs to the major facilitator (TC 2.A.1) superfamily. Organic cation transporter (TC 2.A.1.19) family.</text>
</comment>
<feature type="chain" id="PRO_0000317480" description="Solute carrier family 22 member 7">
    <location>
        <begin position="1"/>
        <end position="547"/>
    </location>
</feature>
<feature type="transmembrane region" description="Helical" evidence="3">
    <location>
        <begin position="21"/>
        <end position="41"/>
    </location>
</feature>
<feature type="transmembrane region" description="Helical" evidence="3">
    <location>
        <begin position="145"/>
        <end position="165"/>
    </location>
</feature>
<feature type="transmembrane region" description="Helical" evidence="3">
    <location>
        <begin position="179"/>
        <end position="199"/>
    </location>
</feature>
<feature type="transmembrane region" description="Helical" evidence="3">
    <location>
        <begin position="203"/>
        <end position="223"/>
    </location>
</feature>
<feature type="transmembrane region" description="Helical" evidence="3">
    <location>
        <begin position="233"/>
        <end position="253"/>
    </location>
</feature>
<feature type="transmembrane region" description="Helical" evidence="3">
    <location>
        <begin position="258"/>
        <end position="278"/>
    </location>
</feature>
<feature type="transmembrane region" description="Helical" evidence="3">
    <location>
        <begin position="345"/>
        <end position="365"/>
    </location>
</feature>
<feature type="transmembrane region" description="Helical" evidence="3">
    <location>
        <begin position="367"/>
        <end position="387"/>
    </location>
</feature>
<feature type="transmembrane region" description="Helical" evidence="3">
    <location>
        <begin position="403"/>
        <end position="423"/>
    </location>
</feature>
<feature type="transmembrane region" description="Helical" evidence="3">
    <location>
        <begin position="431"/>
        <end position="451"/>
    </location>
</feature>
<feature type="transmembrane region" description="Helical" evidence="3">
    <location>
        <begin position="465"/>
        <end position="485"/>
    </location>
</feature>
<feature type="transmembrane region" description="Helical" evidence="3">
    <location>
        <begin position="492"/>
        <end position="512"/>
    </location>
</feature>
<feature type="region of interest" description="Disordered" evidence="4">
    <location>
        <begin position="91"/>
        <end position="112"/>
    </location>
</feature>
<feature type="region of interest" description="Disordered" evidence="4">
    <location>
        <begin position="521"/>
        <end position="547"/>
    </location>
</feature>
<feature type="compositionally biased region" description="Polar residues" evidence="4">
    <location>
        <begin position="91"/>
        <end position="103"/>
    </location>
</feature>
<accession>A6QLW8</accession>
<name>S22A7_BOVIN</name>
<evidence type="ECO:0000250" key="1">
    <source>
        <dbReference type="UniProtKB" id="Q91WU2"/>
    </source>
</evidence>
<evidence type="ECO:0000250" key="2">
    <source>
        <dbReference type="UniProtKB" id="Q9Y694"/>
    </source>
</evidence>
<evidence type="ECO:0000255" key="3"/>
<evidence type="ECO:0000256" key="4">
    <source>
        <dbReference type="SAM" id="MobiDB-lite"/>
    </source>
</evidence>
<evidence type="ECO:0000305" key="5"/>